<sequence length="467" mass="52325">MSDDTTQIEPAMAQETSPRANTRKVFVKTYGCQMNVYDSQRMADSLAAEGYVATDTPDDADLVLLNTCHIREKASEKLYSALGRLRKMKDARAADGKELTIGVAGCVAQAEGQEILRRAPNVDLVIGPQTYHRLPNALARVRGGEKVVETDYAIEDKFEHLPAPRREETRKRGVSAFLTVQEGCDKFCTFCVVPYTRGSEVSRSVKQIVAEAERLADSGVRELTLLGQNVNAWHGEGEDGREWGLGELLFRLARIPGIARLRYTTSHPRDMDDSLIAAHRDLRQLMPYLHLPVQSGSDRILKAMNRRHKADEYLRLIERIRNVRPDMALSGDFIVGFPGETDQDFEDTMQLVRDVNYAQAYSFKYSPRLGTPGADLDDHVEEAVKDERLQRLQALLSAQQYAFQDSMIGRKMDVLLEKPGREAGQMVGRSPWLLPVIIDDNKDRVGDIIHVKIVSTGTNSLIAQKLA</sequence>
<reference key="1">
    <citation type="submission" date="2007-12" db="EMBL/GenBank/DDBJ databases">
        <title>Brucella suis ATCC 23445 whole genome shotgun sequencing project.</title>
        <authorList>
            <person name="Setubal J.C."/>
            <person name="Bowns C."/>
            <person name="Boyle S."/>
            <person name="Crasta O.R."/>
            <person name="Czar M.J."/>
            <person name="Dharmanolla C."/>
            <person name="Gillespie J.J."/>
            <person name="Kenyon R.W."/>
            <person name="Lu J."/>
            <person name="Mane S."/>
            <person name="Mohapatra S."/>
            <person name="Nagrani S."/>
            <person name="Purkayastha A."/>
            <person name="Rajasimha H.K."/>
            <person name="Shallom J.M."/>
            <person name="Shallom S."/>
            <person name="Shukla M."/>
            <person name="Snyder E.E."/>
            <person name="Sobral B.W."/>
            <person name="Wattam A.R."/>
            <person name="Will R."/>
            <person name="Williams K."/>
            <person name="Yoo H."/>
            <person name="Bruce D."/>
            <person name="Detter C."/>
            <person name="Munk C."/>
            <person name="Brettin T.S."/>
        </authorList>
    </citation>
    <scope>NUCLEOTIDE SEQUENCE [LARGE SCALE GENOMIC DNA]</scope>
    <source>
        <strain>ATCC 23445 / NCTC 10510</strain>
    </source>
</reference>
<comment type="function">
    <text evidence="1">Catalyzes the methylthiolation of N6-(dimethylallyl)adenosine (i(6)A), leading to the formation of 2-methylthio-N6-(dimethylallyl)adenosine (ms(2)i(6)A) at position 37 in tRNAs that read codons beginning with uridine.</text>
</comment>
<comment type="catalytic activity">
    <reaction evidence="1">
        <text>N(6)-dimethylallyladenosine(37) in tRNA + (sulfur carrier)-SH + AH2 + 2 S-adenosyl-L-methionine = 2-methylsulfanyl-N(6)-dimethylallyladenosine(37) in tRNA + (sulfur carrier)-H + 5'-deoxyadenosine + L-methionine + A + S-adenosyl-L-homocysteine + 2 H(+)</text>
        <dbReference type="Rhea" id="RHEA:37067"/>
        <dbReference type="Rhea" id="RHEA-COMP:10375"/>
        <dbReference type="Rhea" id="RHEA-COMP:10376"/>
        <dbReference type="Rhea" id="RHEA-COMP:14737"/>
        <dbReference type="Rhea" id="RHEA-COMP:14739"/>
        <dbReference type="ChEBI" id="CHEBI:13193"/>
        <dbReference type="ChEBI" id="CHEBI:15378"/>
        <dbReference type="ChEBI" id="CHEBI:17319"/>
        <dbReference type="ChEBI" id="CHEBI:17499"/>
        <dbReference type="ChEBI" id="CHEBI:29917"/>
        <dbReference type="ChEBI" id="CHEBI:57844"/>
        <dbReference type="ChEBI" id="CHEBI:57856"/>
        <dbReference type="ChEBI" id="CHEBI:59789"/>
        <dbReference type="ChEBI" id="CHEBI:64428"/>
        <dbReference type="ChEBI" id="CHEBI:74415"/>
        <dbReference type="ChEBI" id="CHEBI:74417"/>
        <dbReference type="EC" id="2.8.4.3"/>
    </reaction>
</comment>
<comment type="cofactor">
    <cofactor evidence="1">
        <name>[4Fe-4S] cluster</name>
        <dbReference type="ChEBI" id="CHEBI:49883"/>
    </cofactor>
    <text evidence="1">Binds 2 [4Fe-4S] clusters. One cluster is coordinated with 3 cysteines and an exchangeable S-adenosyl-L-methionine.</text>
</comment>
<comment type="subunit">
    <text evidence="1">Monomer.</text>
</comment>
<comment type="subcellular location">
    <subcellularLocation>
        <location evidence="1">Cytoplasm</location>
    </subcellularLocation>
</comment>
<comment type="similarity">
    <text evidence="1">Belongs to the methylthiotransferase family. MiaB subfamily.</text>
</comment>
<organism>
    <name type="scientific">Brucella suis (strain ATCC 23445 / NCTC 10510)</name>
    <dbReference type="NCBI Taxonomy" id="470137"/>
    <lineage>
        <taxon>Bacteria</taxon>
        <taxon>Pseudomonadati</taxon>
        <taxon>Pseudomonadota</taxon>
        <taxon>Alphaproteobacteria</taxon>
        <taxon>Hyphomicrobiales</taxon>
        <taxon>Brucellaceae</taxon>
        <taxon>Brucella/Ochrobactrum group</taxon>
        <taxon>Brucella</taxon>
    </lineage>
</organism>
<dbReference type="EC" id="2.8.4.3" evidence="1"/>
<dbReference type="EMBL" id="CP000911">
    <property type="protein sequence ID" value="ABY39001.1"/>
    <property type="molecule type" value="Genomic_DNA"/>
</dbReference>
<dbReference type="RefSeq" id="WP_006071830.1">
    <property type="nucleotide sequence ID" value="NC_010169.1"/>
</dbReference>
<dbReference type="SMR" id="B0CK00"/>
<dbReference type="KEGG" id="bmt:BSUIS_A1991"/>
<dbReference type="HOGENOM" id="CLU_018697_2_0_5"/>
<dbReference type="Proteomes" id="UP000008545">
    <property type="component" value="Chromosome I"/>
</dbReference>
<dbReference type="GO" id="GO:0005829">
    <property type="term" value="C:cytosol"/>
    <property type="evidence" value="ECO:0007669"/>
    <property type="project" value="TreeGrafter"/>
</dbReference>
<dbReference type="GO" id="GO:0051539">
    <property type="term" value="F:4 iron, 4 sulfur cluster binding"/>
    <property type="evidence" value="ECO:0007669"/>
    <property type="project" value="UniProtKB-UniRule"/>
</dbReference>
<dbReference type="GO" id="GO:0046872">
    <property type="term" value="F:metal ion binding"/>
    <property type="evidence" value="ECO:0007669"/>
    <property type="project" value="UniProtKB-KW"/>
</dbReference>
<dbReference type="GO" id="GO:0035597">
    <property type="term" value="F:N6-isopentenyladenosine methylthiotransferase activity"/>
    <property type="evidence" value="ECO:0007669"/>
    <property type="project" value="TreeGrafter"/>
</dbReference>
<dbReference type="CDD" id="cd01335">
    <property type="entry name" value="Radical_SAM"/>
    <property type="match status" value="1"/>
</dbReference>
<dbReference type="FunFam" id="3.40.50.12160:FF:000003">
    <property type="entry name" value="CDK5 regulatory subunit-associated protein 1"/>
    <property type="match status" value="1"/>
</dbReference>
<dbReference type="FunFam" id="3.80.30.20:FF:000001">
    <property type="entry name" value="tRNA-2-methylthio-N(6)-dimethylallyladenosine synthase 2"/>
    <property type="match status" value="1"/>
</dbReference>
<dbReference type="Gene3D" id="3.40.50.12160">
    <property type="entry name" value="Methylthiotransferase, N-terminal domain"/>
    <property type="match status" value="1"/>
</dbReference>
<dbReference type="Gene3D" id="3.80.30.20">
    <property type="entry name" value="tm_1862 like domain"/>
    <property type="match status" value="1"/>
</dbReference>
<dbReference type="HAMAP" id="MF_01864">
    <property type="entry name" value="tRNA_metthiotr_MiaB"/>
    <property type="match status" value="1"/>
</dbReference>
<dbReference type="InterPro" id="IPR006638">
    <property type="entry name" value="Elp3/MiaA/NifB-like_rSAM"/>
</dbReference>
<dbReference type="InterPro" id="IPR005839">
    <property type="entry name" value="Methylthiotransferase"/>
</dbReference>
<dbReference type="InterPro" id="IPR020612">
    <property type="entry name" value="Methylthiotransferase_CS"/>
</dbReference>
<dbReference type="InterPro" id="IPR013848">
    <property type="entry name" value="Methylthiotransferase_N"/>
</dbReference>
<dbReference type="InterPro" id="IPR038135">
    <property type="entry name" value="Methylthiotransferase_N_sf"/>
</dbReference>
<dbReference type="InterPro" id="IPR006463">
    <property type="entry name" value="MiaB_methiolase"/>
</dbReference>
<dbReference type="InterPro" id="IPR007197">
    <property type="entry name" value="rSAM"/>
</dbReference>
<dbReference type="InterPro" id="IPR023404">
    <property type="entry name" value="rSAM_horseshoe"/>
</dbReference>
<dbReference type="InterPro" id="IPR002792">
    <property type="entry name" value="TRAM_dom"/>
</dbReference>
<dbReference type="NCBIfam" id="TIGR01574">
    <property type="entry name" value="miaB-methiolase"/>
    <property type="match status" value="1"/>
</dbReference>
<dbReference type="NCBIfam" id="TIGR00089">
    <property type="entry name" value="MiaB/RimO family radical SAM methylthiotransferase"/>
    <property type="match status" value="1"/>
</dbReference>
<dbReference type="PANTHER" id="PTHR43020">
    <property type="entry name" value="CDK5 REGULATORY SUBUNIT-ASSOCIATED PROTEIN 1"/>
    <property type="match status" value="1"/>
</dbReference>
<dbReference type="PANTHER" id="PTHR43020:SF2">
    <property type="entry name" value="MITOCHONDRIAL TRNA METHYLTHIOTRANSFERASE CDK5RAP1"/>
    <property type="match status" value="1"/>
</dbReference>
<dbReference type="Pfam" id="PF04055">
    <property type="entry name" value="Radical_SAM"/>
    <property type="match status" value="1"/>
</dbReference>
<dbReference type="Pfam" id="PF01938">
    <property type="entry name" value="TRAM"/>
    <property type="match status" value="1"/>
</dbReference>
<dbReference type="Pfam" id="PF00919">
    <property type="entry name" value="UPF0004"/>
    <property type="match status" value="1"/>
</dbReference>
<dbReference type="SFLD" id="SFLDF00273">
    <property type="entry name" value="(dimethylallyl)adenosine_tRNA"/>
    <property type="match status" value="1"/>
</dbReference>
<dbReference type="SFLD" id="SFLDG01082">
    <property type="entry name" value="B12-binding_domain_containing"/>
    <property type="match status" value="1"/>
</dbReference>
<dbReference type="SFLD" id="SFLDG01061">
    <property type="entry name" value="methylthiotransferase"/>
    <property type="match status" value="1"/>
</dbReference>
<dbReference type="SMART" id="SM00729">
    <property type="entry name" value="Elp3"/>
    <property type="match status" value="1"/>
</dbReference>
<dbReference type="SUPFAM" id="SSF102114">
    <property type="entry name" value="Radical SAM enzymes"/>
    <property type="match status" value="1"/>
</dbReference>
<dbReference type="PROSITE" id="PS51449">
    <property type="entry name" value="MTTASE_N"/>
    <property type="match status" value="1"/>
</dbReference>
<dbReference type="PROSITE" id="PS01278">
    <property type="entry name" value="MTTASE_RADICAL"/>
    <property type="match status" value="1"/>
</dbReference>
<dbReference type="PROSITE" id="PS51918">
    <property type="entry name" value="RADICAL_SAM"/>
    <property type="match status" value="1"/>
</dbReference>
<dbReference type="PROSITE" id="PS50926">
    <property type="entry name" value="TRAM"/>
    <property type="match status" value="1"/>
</dbReference>
<protein>
    <recommendedName>
        <fullName evidence="1">tRNA-2-methylthio-N(6)-dimethylallyladenosine synthase</fullName>
        <ecNumber evidence="1">2.8.4.3</ecNumber>
    </recommendedName>
    <alternativeName>
        <fullName evidence="1">(Dimethylallyl)adenosine tRNA methylthiotransferase MiaB</fullName>
    </alternativeName>
    <alternativeName>
        <fullName evidence="1">tRNA-i(6)A37 methylthiotransferase</fullName>
    </alternativeName>
</protein>
<gene>
    <name evidence="1" type="primary">miaB</name>
    <name type="ordered locus">BSUIS_A1991</name>
</gene>
<accession>B0CK00</accession>
<feature type="chain" id="PRO_0000374170" description="tRNA-2-methylthio-N(6)-dimethylallyladenosine synthase">
    <location>
        <begin position="1"/>
        <end position="467"/>
    </location>
</feature>
<feature type="domain" description="MTTase N-terminal" evidence="1">
    <location>
        <begin position="23"/>
        <end position="143"/>
    </location>
</feature>
<feature type="domain" description="Radical SAM core" evidence="2">
    <location>
        <begin position="170"/>
        <end position="402"/>
    </location>
</feature>
<feature type="domain" description="TRAM" evidence="1">
    <location>
        <begin position="405"/>
        <end position="467"/>
    </location>
</feature>
<feature type="region of interest" description="Disordered" evidence="3">
    <location>
        <begin position="1"/>
        <end position="20"/>
    </location>
</feature>
<feature type="binding site" evidence="1">
    <location>
        <position position="32"/>
    </location>
    <ligand>
        <name>[4Fe-4S] cluster</name>
        <dbReference type="ChEBI" id="CHEBI:49883"/>
        <label>1</label>
    </ligand>
</feature>
<feature type="binding site" evidence="1">
    <location>
        <position position="68"/>
    </location>
    <ligand>
        <name>[4Fe-4S] cluster</name>
        <dbReference type="ChEBI" id="CHEBI:49883"/>
        <label>1</label>
    </ligand>
</feature>
<feature type="binding site" evidence="1">
    <location>
        <position position="106"/>
    </location>
    <ligand>
        <name>[4Fe-4S] cluster</name>
        <dbReference type="ChEBI" id="CHEBI:49883"/>
        <label>1</label>
    </ligand>
</feature>
<feature type="binding site" evidence="1">
    <location>
        <position position="184"/>
    </location>
    <ligand>
        <name>[4Fe-4S] cluster</name>
        <dbReference type="ChEBI" id="CHEBI:49883"/>
        <label>2</label>
        <note>4Fe-4S-S-AdoMet</note>
    </ligand>
</feature>
<feature type="binding site" evidence="1">
    <location>
        <position position="188"/>
    </location>
    <ligand>
        <name>[4Fe-4S] cluster</name>
        <dbReference type="ChEBI" id="CHEBI:49883"/>
        <label>2</label>
        <note>4Fe-4S-S-AdoMet</note>
    </ligand>
</feature>
<feature type="binding site" evidence="1">
    <location>
        <position position="191"/>
    </location>
    <ligand>
        <name>[4Fe-4S] cluster</name>
        <dbReference type="ChEBI" id="CHEBI:49883"/>
        <label>2</label>
        <note>4Fe-4S-S-AdoMet</note>
    </ligand>
</feature>
<keyword id="KW-0004">4Fe-4S</keyword>
<keyword id="KW-0963">Cytoplasm</keyword>
<keyword id="KW-0408">Iron</keyword>
<keyword id="KW-0411">Iron-sulfur</keyword>
<keyword id="KW-0479">Metal-binding</keyword>
<keyword id="KW-0949">S-adenosyl-L-methionine</keyword>
<keyword id="KW-0808">Transferase</keyword>
<keyword id="KW-0819">tRNA processing</keyword>
<evidence type="ECO:0000255" key="1">
    <source>
        <dbReference type="HAMAP-Rule" id="MF_01864"/>
    </source>
</evidence>
<evidence type="ECO:0000255" key="2">
    <source>
        <dbReference type="PROSITE-ProRule" id="PRU01266"/>
    </source>
</evidence>
<evidence type="ECO:0000256" key="3">
    <source>
        <dbReference type="SAM" id="MobiDB-lite"/>
    </source>
</evidence>
<proteinExistence type="inferred from homology"/>
<name>MIAB_BRUSI</name>